<keyword id="KW-0150">Chloroplast</keyword>
<keyword id="KW-0472">Membrane</keyword>
<keyword id="KW-0602">Photosynthesis</keyword>
<keyword id="KW-0934">Plastid</keyword>
<keyword id="KW-0677">Repeat</keyword>
<keyword id="KW-0793">Thylakoid</keyword>
<keyword id="KW-0802">TPR repeat</keyword>
<reference key="1">
    <citation type="journal article" date="2000" name="J. Mol. Evol.">
        <title>The structure and gene repertoire of an ancient red algal plastid genome.</title>
        <authorList>
            <person name="Gloeckner G."/>
            <person name="Rosenthal A."/>
            <person name="Valentin K.-U."/>
        </authorList>
    </citation>
    <scope>NUCLEOTIDE SEQUENCE [LARGE SCALE GENOMIC DNA]</scope>
    <source>
        <strain>RK-1</strain>
    </source>
</reference>
<name>YCF3_CYACA</name>
<feature type="chain" id="PRO_0000217799" description="Photosystem I assembly protein Ycf3">
    <location>
        <begin position="1"/>
        <end position="173"/>
    </location>
</feature>
<feature type="repeat" description="TPR 1">
    <location>
        <begin position="35"/>
        <end position="68"/>
    </location>
</feature>
<feature type="repeat" description="TPR 2">
    <location>
        <begin position="72"/>
        <end position="105"/>
    </location>
</feature>
<feature type="repeat" description="TPR 3">
    <location>
        <begin position="120"/>
        <end position="153"/>
    </location>
</feature>
<dbReference type="EMBL" id="AF022186">
    <property type="protein sequence ID" value="AAF13021.1"/>
    <property type="molecule type" value="Genomic_DNA"/>
</dbReference>
<dbReference type="RefSeq" id="NP_045024.1">
    <property type="nucleotide sequence ID" value="NC_001840.1"/>
</dbReference>
<dbReference type="SMR" id="Q9TM42"/>
<dbReference type="GeneID" id="800238"/>
<dbReference type="GO" id="GO:0009535">
    <property type="term" value="C:chloroplast thylakoid membrane"/>
    <property type="evidence" value="ECO:0007669"/>
    <property type="project" value="UniProtKB-SubCell"/>
</dbReference>
<dbReference type="GO" id="GO:0015979">
    <property type="term" value="P:photosynthesis"/>
    <property type="evidence" value="ECO:0007669"/>
    <property type="project" value="UniProtKB-UniRule"/>
</dbReference>
<dbReference type="Gene3D" id="1.25.40.10">
    <property type="entry name" value="Tetratricopeptide repeat domain"/>
    <property type="match status" value="1"/>
</dbReference>
<dbReference type="HAMAP" id="MF_00439">
    <property type="entry name" value="Ycf3"/>
    <property type="match status" value="1"/>
</dbReference>
<dbReference type="InterPro" id="IPR022818">
    <property type="entry name" value="PSI_Ycf3_assembly"/>
</dbReference>
<dbReference type="InterPro" id="IPR011990">
    <property type="entry name" value="TPR-like_helical_dom_sf"/>
</dbReference>
<dbReference type="InterPro" id="IPR019734">
    <property type="entry name" value="TPR_rpt"/>
</dbReference>
<dbReference type="NCBIfam" id="NF002725">
    <property type="entry name" value="PRK02603.1"/>
    <property type="match status" value="1"/>
</dbReference>
<dbReference type="Pfam" id="PF00515">
    <property type="entry name" value="TPR_1"/>
    <property type="match status" value="1"/>
</dbReference>
<dbReference type="Pfam" id="PF13181">
    <property type="entry name" value="TPR_8"/>
    <property type="match status" value="1"/>
</dbReference>
<dbReference type="SMART" id="SM00028">
    <property type="entry name" value="TPR"/>
    <property type="match status" value="3"/>
</dbReference>
<dbReference type="SUPFAM" id="SSF48452">
    <property type="entry name" value="TPR-like"/>
    <property type="match status" value="1"/>
</dbReference>
<dbReference type="PROSITE" id="PS50005">
    <property type="entry name" value="TPR"/>
    <property type="match status" value="3"/>
</dbReference>
<dbReference type="PROSITE" id="PS50293">
    <property type="entry name" value="TPR_REGION"/>
    <property type="match status" value="1"/>
</dbReference>
<gene>
    <name evidence="1" type="primary">ycf3</name>
    <name type="synonym">ycf52</name>
</gene>
<comment type="function">
    <text evidence="1">Essential for the assembly of the photosystem I (PSI) complex. May act as a chaperone-like factor to guide the assembly of the PSI subunits.</text>
</comment>
<comment type="subcellular location">
    <subcellularLocation>
        <location evidence="1">Plastid</location>
        <location evidence="1">Chloroplast thylakoid membrane</location>
        <topology evidence="1">Peripheral membrane protein</topology>
    </subcellularLocation>
</comment>
<comment type="similarity">
    <text evidence="1">Belongs to the Ycf3 family.</text>
</comment>
<organism>
    <name type="scientific">Cyanidium caldarium</name>
    <name type="common">Red alga</name>
    <dbReference type="NCBI Taxonomy" id="2771"/>
    <lineage>
        <taxon>Eukaryota</taxon>
        <taxon>Rhodophyta</taxon>
        <taxon>Bangiophyceae</taxon>
        <taxon>Cyanidiales</taxon>
        <taxon>Cyanidiaceae</taxon>
        <taxon>Cyanidium</taxon>
    </lineage>
</organism>
<accession>Q9TM42</accession>
<geneLocation type="chloroplast"/>
<protein>
    <recommendedName>
        <fullName evidence="1">Photosystem I assembly protein Ycf3</fullName>
    </recommendedName>
</protein>
<proteinExistence type="inferred from homology"/>
<evidence type="ECO:0000255" key="1">
    <source>
        <dbReference type="HAMAP-Rule" id="MF_00439"/>
    </source>
</evidence>
<sequence length="173" mass="20163">MPRSQKNDNFIDKTFSIIADLIVKILPTNKESKEAFYYYKDGMAAQSEGEYAEALACYYQALKIEKDPMDKSFILYNIGLIQASNGQHARALEYYHESLKFNPNLVQALNNIAVIYHYYGNKLFEQSKLQEAKLMFDKASNYWRKAIKLAPYNYIEAQNWLKITGRITEDIML</sequence>